<keyword id="KW-0004">4Fe-4S</keyword>
<keyword id="KW-0963">Cytoplasm</keyword>
<keyword id="KW-0408">Iron</keyword>
<keyword id="KW-0411">Iron-sulfur</keyword>
<keyword id="KW-0479">Metal-binding</keyword>
<keyword id="KW-0949">S-adenosyl-L-methionine</keyword>
<keyword id="KW-0808">Transferase</keyword>
<comment type="function">
    <text evidence="1">Catalyzes the radical-mediated insertion of two sulfur atoms into the C-6 and C-8 positions of the octanoyl moiety bound to the lipoyl domains of lipoate-dependent enzymes, thereby converting the octanoylated domains into lipoylated derivatives.</text>
</comment>
<comment type="catalytic activity">
    <reaction evidence="1">
        <text>[[Fe-S] cluster scaffold protein carrying a second [4Fe-4S](2+) cluster] + N(6)-octanoyl-L-lysyl-[protein] + 2 oxidized [2Fe-2S]-[ferredoxin] + 2 S-adenosyl-L-methionine + 4 H(+) = [[Fe-S] cluster scaffold protein] + N(6)-[(R)-dihydrolipoyl]-L-lysyl-[protein] + 4 Fe(3+) + 2 hydrogen sulfide + 2 5'-deoxyadenosine + 2 L-methionine + 2 reduced [2Fe-2S]-[ferredoxin]</text>
        <dbReference type="Rhea" id="RHEA:16585"/>
        <dbReference type="Rhea" id="RHEA-COMP:9928"/>
        <dbReference type="Rhea" id="RHEA-COMP:10000"/>
        <dbReference type="Rhea" id="RHEA-COMP:10001"/>
        <dbReference type="Rhea" id="RHEA-COMP:10475"/>
        <dbReference type="Rhea" id="RHEA-COMP:14568"/>
        <dbReference type="Rhea" id="RHEA-COMP:14569"/>
        <dbReference type="ChEBI" id="CHEBI:15378"/>
        <dbReference type="ChEBI" id="CHEBI:17319"/>
        <dbReference type="ChEBI" id="CHEBI:29034"/>
        <dbReference type="ChEBI" id="CHEBI:29919"/>
        <dbReference type="ChEBI" id="CHEBI:33722"/>
        <dbReference type="ChEBI" id="CHEBI:33737"/>
        <dbReference type="ChEBI" id="CHEBI:33738"/>
        <dbReference type="ChEBI" id="CHEBI:57844"/>
        <dbReference type="ChEBI" id="CHEBI:59789"/>
        <dbReference type="ChEBI" id="CHEBI:78809"/>
        <dbReference type="ChEBI" id="CHEBI:83100"/>
        <dbReference type="EC" id="2.8.1.8"/>
    </reaction>
</comment>
<comment type="cofactor">
    <cofactor evidence="1">
        <name>[4Fe-4S] cluster</name>
        <dbReference type="ChEBI" id="CHEBI:49883"/>
    </cofactor>
    <text evidence="1">Binds 2 [4Fe-4S] clusters per subunit. One cluster is coordinated with 3 cysteines and an exchangeable S-adenosyl-L-methionine.</text>
</comment>
<comment type="pathway">
    <text evidence="1">Protein modification; protein lipoylation via endogenous pathway; protein N(6)-(lipoyl)lysine from octanoyl-[acyl-carrier-protein]: step 2/2.</text>
</comment>
<comment type="subcellular location">
    <subcellularLocation>
        <location evidence="1">Cytoplasm</location>
    </subcellularLocation>
</comment>
<comment type="similarity">
    <text evidence="1">Belongs to the radical SAM superfamily. Lipoyl synthase family.</text>
</comment>
<name>LIPA_SALPC</name>
<feature type="chain" id="PRO_1000124644" description="Lipoyl synthase">
    <location>
        <begin position="1"/>
        <end position="321"/>
    </location>
</feature>
<feature type="domain" description="Radical SAM core" evidence="2">
    <location>
        <begin position="80"/>
        <end position="297"/>
    </location>
</feature>
<feature type="binding site" evidence="1">
    <location>
        <position position="68"/>
    </location>
    <ligand>
        <name>[4Fe-4S] cluster</name>
        <dbReference type="ChEBI" id="CHEBI:49883"/>
        <label>1</label>
    </ligand>
</feature>
<feature type="binding site" evidence="1">
    <location>
        <position position="73"/>
    </location>
    <ligand>
        <name>[4Fe-4S] cluster</name>
        <dbReference type="ChEBI" id="CHEBI:49883"/>
        <label>1</label>
    </ligand>
</feature>
<feature type="binding site" evidence="1">
    <location>
        <position position="79"/>
    </location>
    <ligand>
        <name>[4Fe-4S] cluster</name>
        <dbReference type="ChEBI" id="CHEBI:49883"/>
        <label>1</label>
    </ligand>
</feature>
<feature type="binding site" evidence="1">
    <location>
        <position position="94"/>
    </location>
    <ligand>
        <name>[4Fe-4S] cluster</name>
        <dbReference type="ChEBI" id="CHEBI:49883"/>
        <label>2</label>
        <note>4Fe-4S-S-AdoMet</note>
    </ligand>
</feature>
<feature type="binding site" evidence="1">
    <location>
        <position position="98"/>
    </location>
    <ligand>
        <name>[4Fe-4S] cluster</name>
        <dbReference type="ChEBI" id="CHEBI:49883"/>
        <label>2</label>
        <note>4Fe-4S-S-AdoMet</note>
    </ligand>
</feature>
<feature type="binding site" evidence="1">
    <location>
        <position position="101"/>
    </location>
    <ligand>
        <name>[4Fe-4S] cluster</name>
        <dbReference type="ChEBI" id="CHEBI:49883"/>
        <label>2</label>
        <note>4Fe-4S-S-AdoMet</note>
    </ligand>
</feature>
<feature type="binding site" evidence="1">
    <location>
        <position position="308"/>
    </location>
    <ligand>
        <name>[4Fe-4S] cluster</name>
        <dbReference type="ChEBI" id="CHEBI:49883"/>
        <label>1</label>
    </ligand>
</feature>
<organism>
    <name type="scientific">Salmonella paratyphi C (strain RKS4594)</name>
    <dbReference type="NCBI Taxonomy" id="476213"/>
    <lineage>
        <taxon>Bacteria</taxon>
        <taxon>Pseudomonadati</taxon>
        <taxon>Pseudomonadota</taxon>
        <taxon>Gammaproteobacteria</taxon>
        <taxon>Enterobacterales</taxon>
        <taxon>Enterobacteriaceae</taxon>
        <taxon>Salmonella</taxon>
    </lineage>
</organism>
<dbReference type="EC" id="2.8.1.8" evidence="1"/>
<dbReference type="EMBL" id="CP000857">
    <property type="protein sequence ID" value="ACN44825.1"/>
    <property type="molecule type" value="Genomic_DNA"/>
</dbReference>
<dbReference type="RefSeq" id="WP_000042640.1">
    <property type="nucleotide sequence ID" value="NC_012125.1"/>
</dbReference>
<dbReference type="SMR" id="C0PW62"/>
<dbReference type="KEGG" id="sei:SPC_0648"/>
<dbReference type="HOGENOM" id="CLU_033144_2_1_6"/>
<dbReference type="UniPathway" id="UPA00538">
    <property type="reaction ID" value="UER00593"/>
</dbReference>
<dbReference type="Proteomes" id="UP000001599">
    <property type="component" value="Chromosome"/>
</dbReference>
<dbReference type="GO" id="GO:0005737">
    <property type="term" value="C:cytoplasm"/>
    <property type="evidence" value="ECO:0007669"/>
    <property type="project" value="UniProtKB-SubCell"/>
</dbReference>
<dbReference type="GO" id="GO:0051539">
    <property type="term" value="F:4 iron, 4 sulfur cluster binding"/>
    <property type="evidence" value="ECO:0007669"/>
    <property type="project" value="UniProtKB-UniRule"/>
</dbReference>
<dbReference type="GO" id="GO:0016992">
    <property type="term" value="F:lipoate synthase activity"/>
    <property type="evidence" value="ECO:0007669"/>
    <property type="project" value="UniProtKB-UniRule"/>
</dbReference>
<dbReference type="GO" id="GO:0046872">
    <property type="term" value="F:metal ion binding"/>
    <property type="evidence" value="ECO:0007669"/>
    <property type="project" value="UniProtKB-KW"/>
</dbReference>
<dbReference type="CDD" id="cd01335">
    <property type="entry name" value="Radical_SAM"/>
    <property type="match status" value="1"/>
</dbReference>
<dbReference type="FunFam" id="3.20.20.70:FF:000023">
    <property type="entry name" value="Lipoyl synthase"/>
    <property type="match status" value="1"/>
</dbReference>
<dbReference type="Gene3D" id="3.20.20.70">
    <property type="entry name" value="Aldolase class I"/>
    <property type="match status" value="1"/>
</dbReference>
<dbReference type="HAMAP" id="MF_00206">
    <property type="entry name" value="Lipoyl_synth"/>
    <property type="match status" value="1"/>
</dbReference>
<dbReference type="InterPro" id="IPR013785">
    <property type="entry name" value="Aldolase_TIM"/>
</dbReference>
<dbReference type="InterPro" id="IPR006638">
    <property type="entry name" value="Elp3/MiaA/NifB-like_rSAM"/>
</dbReference>
<dbReference type="InterPro" id="IPR031691">
    <property type="entry name" value="LIAS_N"/>
</dbReference>
<dbReference type="InterPro" id="IPR003698">
    <property type="entry name" value="Lipoyl_synth"/>
</dbReference>
<dbReference type="InterPro" id="IPR007197">
    <property type="entry name" value="rSAM"/>
</dbReference>
<dbReference type="NCBIfam" id="TIGR00510">
    <property type="entry name" value="lipA"/>
    <property type="match status" value="1"/>
</dbReference>
<dbReference type="NCBIfam" id="NF004019">
    <property type="entry name" value="PRK05481.1"/>
    <property type="match status" value="1"/>
</dbReference>
<dbReference type="NCBIfam" id="NF009544">
    <property type="entry name" value="PRK12928.1"/>
    <property type="match status" value="1"/>
</dbReference>
<dbReference type="PANTHER" id="PTHR10949">
    <property type="entry name" value="LIPOYL SYNTHASE"/>
    <property type="match status" value="1"/>
</dbReference>
<dbReference type="PANTHER" id="PTHR10949:SF0">
    <property type="entry name" value="LIPOYL SYNTHASE, MITOCHONDRIAL"/>
    <property type="match status" value="1"/>
</dbReference>
<dbReference type="Pfam" id="PF16881">
    <property type="entry name" value="LIAS_N"/>
    <property type="match status" value="1"/>
</dbReference>
<dbReference type="Pfam" id="PF04055">
    <property type="entry name" value="Radical_SAM"/>
    <property type="match status" value="1"/>
</dbReference>
<dbReference type="PIRSF" id="PIRSF005963">
    <property type="entry name" value="Lipoyl_synth"/>
    <property type="match status" value="1"/>
</dbReference>
<dbReference type="SFLD" id="SFLDF00271">
    <property type="entry name" value="lipoyl_synthase"/>
    <property type="match status" value="1"/>
</dbReference>
<dbReference type="SFLD" id="SFLDS00029">
    <property type="entry name" value="Radical_SAM"/>
    <property type="match status" value="1"/>
</dbReference>
<dbReference type="SMART" id="SM00729">
    <property type="entry name" value="Elp3"/>
    <property type="match status" value="1"/>
</dbReference>
<dbReference type="SUPFAM" id="SSF102114">
    <property type="entry name" value="Radical SAM enzymes"/>
    <property type="match status" value="1"/>
</dbReference>
<dbReference type="PROSITE" id="PS51918">
    <property type="entry name" value="RADICAL_SAM"/>
    <property type="match status" value="1"/>
</dbReference>
<reference key="1">
    <citation type="journal article" date="2009" name="PLoS ONE">
        <title>Salmonella paratyphi C: genetic divergence from Salmonella choleraesuis and pathogenic convergence with Salmonella typhi.</title>
        <authorList>
            <person name="Liu W.-Q."/>
            <person name="Feng Y."/>
            <person name="Wang Y."/>
            <person name="Zou Q.-H."/>
            <person name="Chen F."/>
            <person name="Guo J.-T."/>
            <person name="Peng Y.-H."/>
            <person name="Jin Y."/>
            <person name="Li Y.-G."/>
            <person name="Hu S.-N."/>
            <person name="Johnston R.N."/>
            <person name="Liu G.-R."/>
            <person name="Liu S.-L."/>
        </authorList>
    </citation>
    <scope>NUCLEOTIDE SEQUENCE [LARGE SCALE GENOMIC DNA]</scope>
    <source>
        <strain>RKS4594</strain>
    </source>
</reference>
<evidence type="ECO:0000255" key="1">
    <source>
        <dbReference type="HAMAP-Rule" id="MF_00206"/>
    </source>
</evidence>
<evidence type="ECO:0000255" key="2">
    <source>
        <dbReference type="PROSITE-ProRule" id="PRU01266"/>
    </source>
</evidence>
<gene>
    <name evidence="1" type="primary">lipA</name>
    <name type="ordered locus">SPC_0648</name>
</gene>
<accession>C0PW62</accession>
<proteinExistence type="inferred from homology"/>
<sequence length="321" mass="36042">MSKPIVMERGVKYRDADKMALIPVKNVVTERDALLRKPEWMKIKLPADSTRIQGIKAAMRKNGLHSVCEEASCPNLAECFNHGTATFMILGAICTRRCPFCDVAHGRPVAPDAEEPQKLAQTIADMALRYVVITSVDRDDLRDGGAQHFADCITAIRAKSPEIKIETLVPDFRGRMDRALDILNATPPDVFNHNLENVPRIYRQVRPGADYNWSLKLLERFKEAHPEIPTKSGLMVGLGETNAEIIEVMRDLRRHGVTMLTLGQYLQPSRHHLPVQRYVSPEEFDEMKAEALAMGFTHAACGPFVRSSYHADLQAKGMEVK</sequence>
<protein>
    <recommendedName>
        <fullName evidence="1">Lipoyl synthase</fullName>
        <ecNumber evidence="1">2.8.1.8</ecNumber>
    </recommendedName>
    <alternativeName>
        <fullName evidence="1">Lip-syn</fullName>
        <shortName evidence="1">LS</shortName>
    </alternativeName>
    <alternativeName>
        <fullName evidence="1">Lipoate synthase</fullName>
    </alternativeName>
    <alternativeName>
        <fullName evidence="1">Lipoic acid synthase</fullName>
    </alternativeName>
    <alternativeName>
        <fullName evidence="1">Sulfur insertion protein LipA</fullName>
    </alternativeName>
</protein>